<keyword id="KW-0025">Alternative splicing</keyword>
<keyword id="KW-0165">Cleavage on pair of basic residues</keyword>
<keyword id="KW-1015">Disulfide bond</keyword>
<keyword id="KW-0245">EGF-like domain</keyword>
<keyword id="KW-0325">Glycoprotein</keyword>
<keyword id="KW-0378">Hydrolase</keyword>
<keyword id="KW-0479">Metal-binding</keyword>
<keyword id="KW-0482">Metalloprotease</keyword>
<keyword id="KW-0645">Protease</keyword>
<keyword id="KW-1185">Reference proteome</keyword>
<keyword id="KW-0964">Secreted</keyword>
<keyword id="KW-0732">Signal</keyword>
<keyword id="KW-0862">Zinc</keyword>
<keyword id="KW-0865">Zymogen</keyword>
<feature type="signal peptide" evidence="4">
    <location>
        <begin position="1"/>
        <end position="17"/>
    </location>
</feature>
<feature type="propeptide" id="PRO_0000442678" evidence="3">
    <location>
        <begin position="18"/>
        <end position="158"/>
    </location>
</feature>
<feature type="chain" id="PRO_0000028935" description="Zinc metalloproteinase nas-31">
    <location>
        <begin position="159"/>
        <end position="611"/>
    </location>
</feature>
<feature type="domain" description="Peptidase M12A" evidence="7">
    <location>
        <begin position="159"/>
        <end position="354"/>
    </location>
</feature>
<feature type="domain" description="EGF-like">
    <location>
        <begin position="340"/>
        <end position="396"/>
    </location>
</feature>
<feature type="domain" description="CUB" evidence="5">
    <location>
        <begin position="397"/>
        <end position="516"/>
    </location>
</feature>
<feature type="domain" description="ShKT" evidence="6">
    <location>
        <begin position="532"/>
        <end position="564"/>
    </location>
</feature>
<feature type="region of interest" description="Disordered" evidence="8">
    <location>
        <begin position="82"/>
        <end position="103"/>
    </location>
</feature>
<feature type="compositionally biased region" description="Polar residues" evidence="8">
    <location>
        <begin position="82"/>
        <end position="95"/>
    </location>
</feature>
<feature type="active site" evidence="7">
    <location>
        <position position="252"/>
    </location>
</feature>
<feature type="binding site" evidence="7">
    <location>
        <position position="251"/>
    </location>
    <ligand>
        <name>Zn(2+)</name>
        <dbReference type="ChEBI" id="CHEBI:29105"/>
        <note>catalytic</note>
    </ligand>
</feature>
<feature type="binding site" evidence="7">
    <location>
        <position position="255"/>
    </location>
    <ligand>
        <name>Zn(2+)</name>
        <dbReference type="ChEBI" id="CHEBI:29105"/>
        <note>catalytic</note>
    </ligand>
</feature>
<feature type="binding site" evidence="7">
    <location>
        <position position="261"/>
    </location>
    <ligand>
        <name>Zn(2+)</name>
        <dbReference type="ChEBI" id="CHEBI:29105"/>
        <note>catalytic</note>
    </ligand>
</feature>
<feature type="glycosylation site" description="N-linked (GlcNAc...) asparagine" evidence="4">
    <location>
        <position position="53"/>
    </location>
</feature>
<feature type="glycosylation site" description="N-linked (GlcNAc...) asparagine" evidence="4">
    <location>
        <position position="67"/>
    </location>
</feature>
<feature type="glycosylation site" description="N-linked (GlcNAc...) asparagine" evidence="4">
    <location>
        <position position="200"/>
    </location>
</feature>
<feature type="glycosylation site" description="N-linked (GlcNAc...) asparagine" evidence="4">
    <location>
        <position position="424"/>
    </location>
</feature>
<feature type="disulfide bond" evidence="7">
    <location>
        <begin position="203"/>
        <end position="353"/>
    </location>
</feature>
<feature type="disulfide bond" evidence="7">
    <location>
        <begin position="224"/>
        <end position="243"/>
    </location>
</feature>
<feature type="disulfide bond" evidence="1">
    <location>
        <begin position="357"/>
        <end position="376"/>
    </location>
</feature>
<feature type="disulfide bond" evidence="1">
    <location>
        <begin position="379"/>
        <end position="390"/>
    </location>
</feature>
<feature type="disulfide bond" evidence="1">
    <location>
        <begin position="397"/>
        <end position="428"/>
    </location>
</feature>
<feature type="disulfide bond" evidence="1">
    <location>
        <begin position="455"/>
        <end position="476"/>
    </location>
</feature>
<feature type="disulfide bond" evidence="1">
    <location>
        <begin position="532"/>
        <end position="564"/>
    </location>
</feature>
<feature type="disulfide bond" evidence="1">
    <location>
        <begin position="539"/>
        <end position="557"/>
    </location>
</feature>
<feature type="disulfide bond" evidence="1">
    <location>
        <begin position="548"/>
        <end position="561"/>
    </location>
</feature>
<feature type="splice variant" id="VSP_012356" description="In isoform a." evidence="10">
    <original>DFYKFFGMCRSKKIRSNCKFTCHDCNNNNASPFGSNFFN</original>
    <variation>AAYAWNGFCVNPFYSMQARHYYCAYTCGLCWMNNNNNFY</variation>
    <location>
        <begin position="540"/>
        <end position="578"/>
    </location>
</feature>
<feature type="splice variant" id="VSP_012357" description="In isoform a." evidence="10">
    <location>
        <begin position="579"/>
        <end position="611"/>
    </location>
</feature>
<proteinExistence type="evidence at transcript level"/>
<dbReference type="EC" id="3.4.24.-" evidence="2"/>
<dbReference type="EMBL" id="Z74038">
    <property type="protein sequence ID" value="CAE48502.1"/>
    <property type="molecule type" value="Genomic_DNA"/>
</dbReference>
<dbReference type="EMBL" id="Z74038">
    <property type="protein sequence ID" value="CAA98497.2"/>
    <property type="molecule type" value="Genomic_DNA"/>
</dbReference>
<dbReference type="EMBL" id="AJ561219">
    <property type="protein sequence ID" value="CAD99219.1"/>
    <property type="molecule type" value="mRNA"/>
</dbReference>
<dbReference type="PIR" id="T22904">
    <property type="entry name" value="T22904"/>
</dbReference>
<dbReference type="RefSeq" id="NP_001023993.1">
    <molecule id="Q7JLI1-2"/>
    <property type="nucleotide sequence ID" value="NM_001028822.4"/>
</dbReference>
<dbReference type="RefSeq" id="NP_001023994.1">
    <molecule id="Q7JLI1-1"/>
    <property type="nucleotide sequence ID" value="NM_001028823.6"/>
</dbReference>
<dbReference type="SMR" id="Q7JLI1"/>
<dbReference type="FunCoup" id="Q7JLI1">
    <property type="interactions" value="3"/>
</dbReference>
<dbReference type="STRING" id="6239.F58B4.1b.1"/>
<dbReference type="MEROPS" id="M12.310"/>
<dbReference type="GlyCosmos" id="Q7JLI1">
    <property type="glycosylation" value="4 sites, No reported glycans"/>
</dbReference>
<dbReference type="PaxDb" id="6239-F58B4.1b"/>
<dbReference type="EnsemblMetazoa" id="F58B4.1a.1">
    <molecule id="Q7JLI1-2"/>
    <property type="protein sequence ID" value="F58B4.1a.1"/>
    <property type="gene ID" value="WBGene00003549"/>
</dbReference>
<dbReference type="EnsemblMetazoa" id="F58B4.1b.1">
    <molecule id="Q7JLI1-1"/>
    <property type="protein sequence ID" value="F58B4.1b.1"/>
    <property type="gene ID" value="WBGene00003549"/>
</dbReference>
<dbReference type="GeneID" id="186493"/>
<dbReference type="KEGG" id="cel:CELE_F58B4.1"/>
<dbReference type="UCSC" id="F58B4.1b">
    <molecule id="Q7JLI1-1"/>
    <property type="organism name" value="c. elegans"/>
</dbReference>
<dbReference type="AGR" id="WB:WBGene00003549"/>
<dbReference type="CTD" id="186493"/>
<dbReference type="WormBase" id="F58B4.1a">
    <molecule id="Q7JLI1-2"/>
    <property type="protein sequence ID" value="CE35881"/>
    <property type="gene ID" value="WBGene00003549"/>
    <property type="gene designation" value="nas-31"/>
</dbReference>
<dbReference type="WormBase" id="F58B4.1b">
    <molecule id="Q7JLI1-1"/>
    <property type="protein sequence ID" value="CE35882"/>
    <property type="gene ID" value="WBGene00003549"/>
    <property type="gene designation" value="nas-31"/>
</dbReference>
<dbReference type="eggNOG" id="KOG3714">
    <property type="taxonomic scope" value="Eukaryota"/>
</dbReference>
<dbReference type="HOGENOM" id="CLU_017286_1_5_1"/>
<dbReference type="InParanoid" id="Q7JLI1"/>
<dbReference type="OMA" id="HYKCKEL"/>
<dbReference type="OrthoDB" id="5786116at2759"/>
<dbReference type="PhylomeDB" id="Q7JLI1"/>
<dbReference type="PRO" id="PR:Q7JLI1"/>
<dbReference type="Proteomes" id="UP000001940">
    <property type="component" value="Chromosome V"/>
</dbReference>
<dbReference type="Bgee" id="WBGene00003549">
    <property type="expression patterns" value="Expressed in larva and 2 other cell types or tissues"/>
</dbReference>
<dbReference type="GO" id="GO:0005576">
    <property type="term" value="C:extracellular region"/>
    <property type="evidence" value="ECO:0007669"/>
    <property type="project" value="UniProtKB-SubCell"/>
</dbReference>
<dbReference type="GO" id="GO:0004222">
    <property type="term" value="F:metalloendopeptidase activity"/>
    <property type="evidence" value="ECO:0000318"/>
    <property type="project" value="GO_Central"/>
</dbReference>
<dbReference type="GO" id="GO:0008270">
    <property type="term" value="F:zinc ion binding"/>
    <property type="evidence" value="ECO:0007669"/>
    <property type="project" value="InterPro"/>
</dbReference>
<dbReference type="GO" id="GO:0018996">
    <property type="term" value="P:molting cycle, collagen and cuticulin-based cuticle"/>
    <property type="evidence" value="ECO:0007669"/>
    <property type="project" value="InterPro"/>
</dbReference>
<dbReference type="GO" id="GO:0006508">
    <property type="term" value="P:proteolysis"/>
    <property type="evidence" value="ECO:0007669"/>
    <property type="project" value="UniProtKB-KW"/>
</dbReference>
<dbReference type="CDD" id="cd04280">
    <property type="entry name" value="ZnMc_astacin_like"/>
    <property type="match status" value="1"/>
</dbReference>
<dbReference type="FunFam" id="3.40.390.10:FF:000048">
    <property type="entry name" value="Zinc metalloproteinase"/>
    <property type="match status" value="1"/>
</dbReference>
<dbReference type="Gene3D" id="3.40.390.10">
    <property type="entry name" value="Collagenase (Catalytic Domain)"/>
    <property type="match status" value="1"/>
</dbReference>
<dbReference type="InterPro" id="IPR034035">
    <property type="entry name" value="Astacin-like_dom"/>
</dbReference>
<dbReference type="InterPro" id="IPR000859">
    <property type="entry name" value="CUB_dom"/>
</dbReference>
<dbReference type="InterPro" id="IPR024079">
    <property type="entry name" value="MetalloPept_cat_dom_sf"/>
</dbReference>
<dbReference type="InterPro" id="IPR017050">
    <property type="entry name" value="Metallopeptidase_nem"/>
</dbReference>
<dbReference type="InterPro" id="IPR001506">
    <property type="entry name" value="Peptidase_M12A"/>
</dbReference>
<dbReference type="InterPro" id="IPR006026">
    <property type="entry name" value="Peptidase_Metallo"/>
</dbReference>
<dbReference type="InterPro" id="IPR003582">
    <property type="entry name" value="ShKT_dom"/>
</dbReference>
<dbReference type="InterPro" id="IPR035914">
    <property type="entry name" value="Sperma_CUB_dom_sf"/>
</dbReference>
<dbReference type="PANTHER" id="PTHR10127">
    <property type="entry name" value="DISCOIDIN, CUB, EGF, LAMININ , AND ZINC METALLOPROTEASE DOMAIN CONTAINING"/>
    <property type="match status" value="1"/>
</dbReference>
<dbReference type="PANTHER" id="PTHR10127:SF793">
    <property type="entry name" value="ZINC METALLOPROTEINASE NAS-31"/>
    <property type="match status" value="1"/>
</dbReference>
<dbReference type="Pfam" id="PF01400">
    <property type="entry name" value="Astacin"/>
    <property type="match status" value="1"/>
</dbReference>
<dbReference type="Pfam" id="PF01549">
    <property type="entry name" value="ShK"/>
    <property type="match status" value="1"/>
</dbReference>
<dbReference type="PIRSF" id="PIRSF036365">
    <property type="entry name" value="Astacin_nematoda"/>
    <property type="match status" value="1"/>
</dbReference>
<dbReference type="PRINTS" id="PR00480">
    <property type="entry name" value="ASTACIN"/>
</dbReference>
<dbReference type="SMART" id="SM00254">
    <property type="entry name" value="ShKT"/>
    <property type="match status" value="1"/>
</dbReference>
<dbReference type="SMART" id="SM00235">
    <property type="entry name" value="ZnMc"/>
    <property type="match status" value="1"/>
</dbReference>
<dbReference type="SUPFAM" id="SSF55486">
    <property type="entry name" value="Metalloproteases ('zincins'), catalytic domain"/>
    <property type="match status" value="1"/>
</dbReference>
<dbReference type="SUPFAM" id="SSF49854">
    <property type="entry name" value="Spermadhesin, CUB domain"/>
    <property type="match status" value="1"/>
</dbReference>
<dbReference type="PROSITE" id="PS51864">
    <property type="entry name" value="ASTACIN"/>
    <property type="match status" value="1"/>
</dbReference>
<dbReference type="PROSITE" id="PS01180">
    <property type="entry name" value="CUB"/>
    <property type="match status" value="1"/>
</dbReference>
<dbReference type="PROSITE" id="PS00022">
    <property type="entry name" value="EGF_1"/>
    <property type="match status" value="1"/>
</dbReference>
<dbReference type="PROSITE" id="PS01186">
    <property type="entry name" value="EGF_2"/>
    <property type="match status" value="1"/>
</dbReference>
<dbReference type="PROSITE" id="PS51670">
    <property type="entry name" value="SHKT"/>
    <property type="match status" value="1"/>
</dbReference>
<dbReference type="PROSITE" id="PS00142">
    <property type="entry name" value="ZINC_PROTEASE"/>
    <property type="match status" value="1"/>
</dbReference>
<organism>
    <name type="scientific">Caenorhabditis elegans</name>
    <dbReference type="NCBI Taxonomy" id="6239"/>
    <lineage>
        <taxon>Eukaryota</taxon>
        <taxon>Metazoa</taxon>
        <taxon>Ecdysozoa</taxon>
        <taxon>Nematoda</taxon>
        <taxon>Chromadorea</taxon>
        <taxon>Rhabditida</taxon>
        <taxon>Rhabditina</taxon>
        <taxon>Rhabditomorpha</taxon>
        <taxon>Rhabditoidea</taxon>
        <taxon>Rhabditidae</taxon>
        <taxon>Peloderinae</taxon>
        <taxon>Caenorhabditis</taxon>
    </lineage>
</organism>
<gene>
    <name type="primary">nas-31</name>
    <name type="ORF">F58B4.1</name>
</gene>
<comment type="function">
    <text evidence="2">Metalloprotease.</text>
</comment>
<comment type="cofactor">
    <cofactor evidence="7">
        <name>Zn(2+)</name>
        <dbReference type="ChEBI" id="CHEBI:29105"/>
    </cofactor>
    <text evidence="7">Binds 1 zinc ion per subunit.</text>
</comment>
<comment type="subcellular location">
    <subcellularLocation>
        <location evidence="11">Secreted</location>
    </subcellularLocation>
</comment>
<comment type="alternative products">
    <event type="alternative splicing"/>
    <isoform>
        <id>Q7JLI1-1</id>
        <name>b</name>
        <sequence type="displayed"/>
    </isoform>
    <isoform>
        <id>Q7JLI1-2</id>
        <name>a</name>
        <sequence type="described" ref="VSP_012356 VSP_012357"/>
    </isoform>
</comment>
<comment type="tissue specificity">
    <text evidence="9">Expressed in excretory cell and in amphid and phasmid sheath glia.</text>
</comment>
<reference key="1">
    <citation type="journal article" date="1998" name="Science">
        <title>Genome sequence of the nematode C. elegans: a platform for investigating biology.</title>
        <authorList>
            <consortium name="The C. elegans sequencing consortium"/>
        </authorList>
    </citation>
    <scope>NUCLEOTIDE SEQUENCE [LARGE SCALE GENOMIC DNA]</scope>
    <scope>ALTERNATIVE SPLICING</scope>
    <source>
        <strain>Bristol N2</strain>
    </source>
</reference>
<reference key="2">
    <citation type="journal article" date="2003" name="Eur. J. Biochem.">
        <title>The astacin protein family in Caenorhabditis elegans.</title>
        <authorList>
            <person name="Moehrlen F."/>
            <person name="Hutter H."/>
            <person name="Zwilling R."/>
        </authorList>
    </citation>
    <scope>NUCLEOTIDE SEQUENCE [MRNA] OF 246-296 (ISOFORMS A AND B)</scope>
    <scope>NOMENCLATURE</scope>
    <source>
        <strain>Bristol N2</strain>
    </source>
</reference>
<reference key="3">
    <citation type="journal article" date="2010" name="BMC Dev. Biol.">
        <title>Characterization of the astacin family of metalloproteases in C. elegans.</title>
        <authorList>
            <person name="Park J.O."/>
            <person name="Pan J."/>
            <person name="Moehrlen F."/>
            <person name="Schupp M.O."/>
            <person name="Johnsen R."/>
            <person name="Baillie D.L."/>
            <person name="Zapf R."/>
            <person name="Moerman D.G."/>
            <person name="Hutter H."/>
        </authorList>
    </citation>
    <scope>TISSUE SPECIFICITY</scope>
</reference>
<sequence>MILQLLFYSLFTHLAVSQIDVNQALNQNKLNIDTISSSAISDAELEKTFPRTNLSRMRNALKSLRQNWSAKLQAMPARNYQNAGTNQENGATEQQKPLREKPRDRVKMEGDTLHQVNKAAGLNDILYQGDMVLTDDQIATILEARDETTVSTASRARRQAYRDRYYPSTTWGSSVYYYYDRTATPKIVKAFEQAVAFWQNVTCINIMQSSTAINRIRVFKGQGCYSYVGRISGVQDLSLGTGCEEFGTAAHELGHALGFFHTQSRYDRDNYISINYANIDPSYVEQFDKETSNTNFNYGMPYDYGSIMQYGATSASSNDKATMIARDTEYQDTMGSDFVGFYDISMMNEHYKCKELCPAASSAQCKNGGFPSPRNCAICICPSGYGGILCDQRPPGCGDSVTATTTWQTLTNTIGDGLPTLRDNHTMCNYWVKAPDNQAVEIRISGLTTVTIDGCIFGGVEIKTHKDQKLTGYRYCSSADQNTVHRSTGSLVPIILFNRYASTKAVLEYRAVTPSVDVSATYTTFAPIVNSCQDLHPNCDFYKFFGMCRSKKIRSNCKFTCHDCNNNNASPFGSNFFNNNYNSFNNWYTNKNKNYYPYSNSNNNKPWMWFF</sequence>
<evidence type="ECO:0000250" key="1"/>
<evidence type="ECO:0000250" key="2">
    <source>
        <dbReference type="UniProtKB" id="A8Q2D1"/>
    </source>
</evidence>
<evidence type="ECO:0000250" key="3">
    <source>
        <dbReference type="UniProtKB" id="P13497"/>
    </source>
</evidence>
<evidence type="ECO:0000255" key="4"/>
<evidence type="ECO:0000255" key="5">
    <source>
        <dbReference type="PROSITE-ProRule" id="PRU00059"/>
    </source>
</evidence>
<evidence type="ECO:0000255" key="6">
    <source>
        <dbReference type="PROSITE-ProRule" id="PRU01005"/>
    </source>
</evidence>
<evidence type="ECO:0000255" key="7">
    <source>
        <dbReference type="PROSITE-ProRule" id="PRU01211"/>
    </source>
</evidence>
<evidence type="ECO:0000256" key="8">
    <source>
        <dbReference type="SAM" id="MobiDB-lite"/>
    </source>
</evidence>
<evidence type="ECO:0000269" key="9">
    <source>
    </source>
</evidence>
<evidence type="ECO:0000303" key="10">
    <source>
    </source>
</evidence>
<evidence type="ECO:0000305" key="11"/>
<protein>
    <recommendedName>
        <fullName>Zinc metalloproteinase nas-31</fullName>
        <ecNumber evidence="2">3.4.24.-</ecNumber>
    </recommendedName>
    <alternativeName>
        <fullName>Nematode astacin 31</fullName>
    </alternativeName>
</protein>
<accession>Q7JLI1</accession>
<accession>Q20975</accession>
<accession>Q7Z0M2</accession>
<name>NAS31_CAEEL</name>